<name>PYRB_CAMJR</name>
<dbReference type="EC" id="2.1.3.2" evidence="1"/>
<dbReference type="EMBL" id="CP000025">
    <property type="protein sequence ID" value="AAW35563.1"/>
    <property type="molecule type" value="Genomic_DNA"/>
</dbReference>
<dbReference type="RefSeq" id="WP_002867196.1">
    <property type="nucleotide sequence ID" value="NC_003912.7"/>
</dbReference>
<dbReference type="SMR" id="Q5HU06"/>
<dbReference type="KEGG" id="cjr:CJE1241"/>
<dbReference type="HOGENOM" id="CLU_043846_2_0_7"/>
<dbReference type="UniPathway" id="UPA00070">
    <property type="reaction ID" value="UER00116"/>
</dbReference>
<dbReference type="GO" id="GO:0005829">
    <property type="term" value="C:cytosol"/>
    <property type="evidence" value="ECO:0007669"/>
    <property type="project" value="TreeGrafter"/>
</dbReference>
<dbReference type="GO" id="GO:0016597">
    <property type="term" value="F:amino acid binding"/>
    <property type="evidence" value="ECO:0007669"/>
    <property type="project" value="InterPro"/>
</dbReference>
<dbReference type="GO" id="GO:0004070">
    <property type="term" value="F:aspartate carbamoyltransferase activity"/>
    <property type="evidence" value="ECO:0007669"/>
    <property type="project" value="UniProtKB-UniRule"/>
</dbReference>
<dbReference type="GO" id="GO:0006207">
    <property type="term" value="P:'de novo' pyrimidine nucleobase biosynthetic process"/>
    <property type="evidence" value="ECO:0007669"/>
    <property type="project" value="InterPro"/>
</dbReference>
<dbReference type="GO" id="GO:0044205">
    <property type="term" value="P:'de novo' UMP biosynthetic process"/>
    <property type="evidence" value="ECO:0007669"/>
    <property type="project" value="UniProtKB-UniRule"/>
</dbReference>
<dbReference type="GO" id="GO:0006520">
    <property type="term" value="P:amino acid metabolic process"/>
    <property type="evidence" value="ECO:0007669"/>
    <property type="project" value="InterPro"/>
</dbReference>
<dbReference type="Gene3D" id="3.40.50.1370">
    <property type="entry name" value="Aspartate/ornithine carbamoyltransferase"/>
    <property type="match status" value="2"/>
</dbReference>
<dbReference type="HAMAP" id="MF_00001">
    <property type="entry name" value="Asp_carb_tr"/>
    <property type="match status" value="1"/>
</dbReference>
<dbReference type="InterPro" id="IPR006132">
    <property type="entry name" value="Asp/Orn_carbamoyltranf_P-bd"/>
</dbReference>
<dbReference type="InterPro" id="IPR006130">
    <property type="entry name" value="Asp/Orn_carbamoylTrfase"/>
</dbReference>
<dbReference type="InterPro" id="IPR036901">
    <property type="entry name" value="Asp/Orn_carbamoylTrfase_sf"/>
</dbReference>
<dbReference type="InterPro" id="IPR002082">
    <property type="entry name" value="Asp_carbamoyltransf"/>
</dbReference>
<dbReference type="InterPro" id="IPR006131">
    <property type="entry name" value="Asp_carbamoyltransf_Asp/Orn-bd"/>
</dbReference>
<dbReference type="NCBIfam" id="TIGR00670">
    <property type="entry name" value="asp_carb_tr"/>
    <property type="match status" value="1"/>
</dbReference>
<dbReference type="NCBIfam" id="NF002032">
    <property type="entry name" value="PRK00856.1"/>
    <property type="match status" value="1"/>
</dbReference>
<dbReference type="PANTHER" id="PTHR45753:SF6">
    <property type="entry name" value="ASPARTATE CARBAMOYLTRANSFERASE"/>
    <property type="match status" value="1"/>
</dbReference>
<dbReference type="PANTHER" id="PTHR45753">
    <property type="entry name" value="ORNITHINE CARBAMOYLTRANSFERASE, MITOCHONDRIAL"/>
    <property type="match status" value="1"/>
</dbReference>
<dbReference type="Pfam" id="PF00185">
    <property type="entry name" value="OTCace"/>
    <property type="match status" value="1"/>
</dbReference>
<dbReference type="Pfam" id="PF02729">
    <property type="entry name" value="OTCace_N"/>
    <property type="match status" value="1"/>
</dbReference>
<dbReference type="PRINTS" id="PR00100">
    <property type="entry name" value="AOTCASE"/>
</dbReference>
<dbReference type="PRINTS" id="PR00101">
    <property type="entry name" value="ATCASE"/>
</dbReference>
<dbReference type="SUPFAM" id="SSF53671">
    <property type="entry name" value="Aspartate/ornithine carbamoyltransferase"/>
    <property type="match status" value="1"/>
</dbReference>
<dbReference type="PROSITE" id="PS00097">
    <property type="entry name" value="CARBAMOYLTRANSFERASE"/>
    <property type="match status" value="1"/>
</dbReference>
<comment type="function">
    <text evidence="1">Catalyzes the condensation of carbamoyl phosphate and aspartate to form carbamoyl aspartate and inorganic phosphate, the committed step in the de novo pyrimidine nucleotide biosynthesis pathway.</text>
</comment>
<comment type="catalytic activity">
    <reaction evidence="1">
        <text>carbamoyl phosphate + L-aspartate = N-carbamoyl-L-aspartate + phosphate + H(+)</text>
        <dbReference type="Rhea" id="RHEA:20013"/>
        <dbReference type="ChEBI" id="CHEBI:15378"/>
        <dbReference type="ChEBI" id="CHEBI:29991"/>
        <dbReference type="ChEBI" id="CHEBI:32814"/>
        <dbReference type="ChEBI" id="CHEBI:43474"/>
        <dbReference type="ChEBI" id="CHEBI:58228"/>
        <dbReference type="EC" id="2.1.3.2"/>
    </reaction>
</comment>
<comment type="pathway">
    <text evidence="1">Pyrimidine metabolism; UMP biosynthesis via de novo pathway; (S)-dihydroorotate from bicarbonate: step 2/3.</text>
</comment>
<comment type="subunit">
    <text evidence="1">Heterododecamer (2C3:3R2) of six catalytic PyrB chains organized as two trimers (C3), and six regulatory PyrI chains organized as three dimers (R2).</text>
</comment>
<comment type="similarity">
    <text evidence="1">Belongs to the aspartate/ornithine carbamoyltransferase superfamily. ATCase family.</text>
</comment>
<organism>
    <name type="scientific">Campylobacter jejuni (strain RM1221)</name>
    <dbReference type="NCBI Taxonomy" id="195099"/>
    <lineage>
        <taxon>Bacteria</taxon>
        <taxon>Pseudomonadati</taxon>
        <taxon>Campylobacterota</taxon>
        <taxon>Epsilonproteobacteria</taxon>
        <taxon>Campylobacterales</taxon>
        <taxon>Campylobacteraceae</taxon>
        <taxon>Campylobacter</taxon>
    </lineage>
</organism>
<feature type="chain" id="PRO_0000113115" description="Aspartate carbamoyltransferase catalytic subunit">
    <location>
        <begin position="1"/>
        <end position="295"/>
    </location>
</feature>
<feature type="binding site" evidence="1">
    <location>
        <position position="49"/>
    </location>
    <ligand>
        <name>carbamoyl phosphate</name>
        <dbReference type="ChEBI" id="CHEBI:58228"/>
    </ligand>
</feature>
<feature type="binding site" evidence="1">
    <location>
        <position position="50"/>
    </location>
    <ligand>
        <name>carbamoyl phosphate</name>
        <dbReference type="ChEBI" id="CHEBI:58228"/>
    </ligand>
</feature>
<feature type="binding site" evidence="1">
    <location>
        <position position="77"/>
    </location>
    <ligand>
        <name>L-aspartate</name>
        <dbReference type="ChEBI" id="CHEBI:29991"/>
    </ligand>
</feature>
<feature type="binding site" evidence="1">
    <location>
        <position position="99"/>
    </location>
    <ligand>
        <name>carbamoyl phosphate</name>
        <dbReference type="ChEBI" id="CHEBI:58228"/>
    </ligand>
</feature>
<feature type="binding site" evidence="1">
    <location>
        <position position="127"/>
    </location>
    <ligand>
        <name>carbamoyl phosphate</name>
        <dbReference type="ChEBI" id="CHEBI:58228"/>
    </ligand>
</feature>
<feature type="binding site" evidence="1">
    <location>
        <position position="130"/>
    </location>
    <ligand>
        <name>carbamoyl phosphate</name>
        <dbReference type="ChEBI" id="CHEBI:58228"/>
    </ligand>
</feature>
<feature type="binding site" evidence="1">
    <location>
        <position position="161"/>
    </location>
    <ligand>
        <name>L-aspartate</name>
        <dbReference type="ChEBI" id="CHEBI:29991"/>
    </ligand>
</feature>
<feature type="binding site" evidence="1">
    <location>
        <position position="212"/>
    </location>
    <ligand>
        <name>L-aspartate</name>
        <dbReference type="ChEBI" id="CHEBI:29991"/>
    </ligand>
</feature>
<feature type="binding site" evidence="1">
    <location>
        <position position="251"/>
    </location>
    <ligand>
        <name>carbamoyl phosphate</name>
        <dbReference type="ChEBI" id="CHEBI:58228"/>
    </ligand>
</feature>
<feature type="binding site" evidence="1">
    <location>
        <position position="252"/>
    </location>
    <ligand>
        <name>carbamoyl phosphate</name>
        <dbReference type="ChEBI" id="CHEBI:58228"/>
    </ligand>
</feature>
<proteinExistence type="inferred from homology"/>
<sequence>MRHLITTKDFNKVEIMELFKEASDFLDEKPRTFLEGKSITTIFFENSTRTLSSFESAARRLGARVLRLDVSRSSSSKGETLYDTAANLDAMSPNAIVVRHANSGVPLILAKHMHCPVVNGGDGKHAHPTQALLDLFTIYNHFQGNVEGKKICIVGDIKNSRVAASNIELLSRFNLDITLVAPPHFMPNTHLKKHYKLDENIIANSDIIMSLRTQTERHNKTVYASLKDYANDFCIQKSLAKDKKLILLHPGPVNRNIDISDEMMSDERTLVLKQVKNGVAIRMAVLKKLILENEG</sequence>
<accession>Q5HU06</accession>
<evidence type="ECO:0000255" key="1">
    <source>
        <dbReference type="HAMAP-Rule" id="MF_00001"/>
    </source>
</evidence>
<gene>
    <name evidence="1" type="primary">pyrB</name>
    <name type="ordered locus">CJE1241</name>
</gene>
<keyword id="KW-0665">Pyrimidine biosynthesis</keyword>
<keyword id="KW-0808">Transferase</keyword>
<reference key="1">
    <citation type="journal article" date="2005" name="PLoS Biol.">
        <title>Major structural differences and novel potential virulence mechanisms from the genomes of multiple Campylobacter species.</title>
        <authorList>
            <person name="Fouts D.E."/>
            <person name="Mongodin E.F."/>
            <person name="Mandrell R.E."/>
            <person name="Miller W.G."/>
            <person name="Rasko D.A."/>
            <person name="Ravel J."/>
            <person name="Brinkac L.M."/>
            <person name="DeBoy R.T."/>
            <person name="Parker C.T."/>
            <person name="Daugherty S.C."/>
            <person name="Dodson R.J."/>
            <person name="Durkin A.S."/>
            <person name="Madupu R."/>
            <person name="Sullivan S.A."/>
            <person name="Shetty J.U."/>
            <person name="Ayodeji M.A."/>
            <person name="Shvartsbeyn A."/>
            <person name="Schatz M.C."/>
            <person name="Badger J.H."/>
            <person name="Fraser C.M."/>
            <person name="Nelson K.E."/>
        </authorList>
    </citation>
    <scope>NUCLEOTIDE SEQUENCE [LARGE SCALE GENOMIC DNA]</scope>
    <source>
        <strain>RM1221</strain>
    </source>
</reference>
<protein>
    <recommendedName>
        <fullName evidence="1">Aspartate carbamoyltransferase catalytic subunit</fullName>
        <ecNumber evidence="1">2.1.3.2</ecNumber>
    </recommendedName>
    <alternativeName>
        <fullName evidence="1">Aspartate transcarbamylase</fullName>
        <shortName evidence="1">ATCase</shortName>
    </alternativeName>
</protein>